<feature type="chain" id="PRO_0000328309" description="Striatin homolog">
    <location>
        <begin position="1"/>
        <end position="827"/>
    </location>
</feature>
<feature type="repeat" description="WD 1">
    <location>
        <begin position="495"/>
        <end position="534"/>
    </location>
</feature>
<feature type="repeat" description="WD 2">
    <location>
        <begin position="548"/>
        <end position="593"/>
    </location>
</feature>
<feature type="repeat" description="WD 3">
    <location>
        <begin position="610"/>
        <end position="649"/>
    </location>
</feature>
<feature type="repeat" description="WD 4">
    <location>
        <begin position="709"/>
        <end position="748"/>
    </location>
</feature>
<feature type="repeat" description="WD 5">
    <location>
        <begin position="751"/>
        <end position="790"/>
    </location>
</feature>
<feature type="repeat" description="WD 6">
    <location>
        <begin position="797"/>
        <end position="827"/>
    </location>
</feature>
<feature type="region of interest" description="Disordered" evidence="4">
    <location>
        <begin position="99"/>
        <end position="123"/>
    </location>
</feature>
<feature type="region of interest" description="Disordered" evidence="4">
    <location>
        <begin position="181"/>
        <end position="270"/>
    </location>
</feature>
<feature type="region of interest" description="Disordered" evidence="4">
    <location>
        <begin position="311"/>
        <end position="362"/>
    </location>
</feature>
<feature type="region of interest" description="Disordered" evidence="4">
    <location>
        <begin position="400"/>
        <end position="459"/>
    </location>
</feature>
<feature type="coiled-coil region" evidence="3">
    <location>
        <begin position="37"/>
        <end position="109"/>
    </location>
</feature>
<feature type="compositionally biased region" description="Basic and acidic residues" evidence="4">
    <location>
        <begin position="109"/>
        <end position="123"/>
    </location>
</feature>
<feature type="compositionally biased region" description="Low complexity" evidence="4">
    <location>
        <begin position="184"/>
        <end position="270"/>
    </location>
</feature>
<feature type="compositionally biased region" description="Low complexity" evidence="4">
    <location>
        <begin position="311"/>
        <end position="334"/>
    </location>
</feature>
<feature type="compositionally biased region" description="Polar residues" evidence="4">
    <location>
        <begin position="337"/>
        <end position="346"/>
    </location>
</feature>
<feature type="compositionally biased region" description="Low complexity" evidence="4">
    <location>
        <begin position="347"/>
        <end position="356"/>
    </location>
</feature>
<feature type="compositionally biased region" description="Low complexity" evidence="4">
    <location>
        <begin position="416"/>
        <end position="432"/>
    </location>
</feature>
<feature type="compositionally biased region" description="Low complexity" evidence="4">
    <location>
        <begin position="439"/>
        <end position="453"/>
    </location>
</feature>
<protein>
    <recommendedName>
        <fullName>Striatin homolog</fullName>
    </recommendedName>
</protein>
<evidence type="ECO:0000250" key="1"/>
<evidence type="ECO:0000250" key="2">
    <source>
        <dbReference type="UniProtKB" id="Q13033"/>
    </source>
</evidence>
<evidence type="ECO:0000255" key="3"/>
<evidence type="ECO:0000256" key="4">
    <source>
        <dbReference type="SAM" id="MobiDB-lite"/>
    </source>
</evidence>
<evidence type="ECO:0000305" key="5"/>
<dbReference type="EMBL" id="AAFI02000111">
    <property type="protein sequence ID" value="EAL63260.1"/>
    <property type="molecule type" value="Genomic_DNA"/>
</dbReference>
<dbReference type="RefSeq" id="XP_636764.1">
    <property type="nucleotide sequence ID" value="XM_631672.1"/>
</dbReference>
<dbReference type="SMR" id="Q54J37"/>
<dbReference type="FunCoup" id="Q54J37">
    <property type="interactions" value="102"/>
</dbReference>
<dbReference type="STRING" id="44689.Q54J37"/>
<dbReference type="PaxDb" id="44689-DDB0304999"/>
<dbReference type="EnsemblProtists" id="EAL63260">
    <property type="protein sequence ID" value="EAL63260"/>
    <property type="gene ID" value="DDB_G0288327"/>
</dbReference>
<dbReference type="GeneID" id="8626567"/>
<dbReference type="KEGG" id="ddi:DDB_G0288327"/>
<dbReference type="dictyBase" id="DDB_G0288327">
    <property type="gene designation" value="strn"/>
</dbReference>
<dbReference type="VEuPathDB" id="AmoebaDB:DDB_G0288327"/>
<dbReference type="eggNOG" id="KOG0642">
    <property type="taxonomic scope" value="Eukaryota"/>
</dbReference>
<dbReference type="HOGENOM" id="CLU_009108_2_0_1"/>
<dbReference type="InParanoid" id="Q54J37"/>
<dbReference type="OMA" id="SKCSQEV"/>
<dbReference type="PhylomeDB" id="Q54J37"/>
<dbReference type="PRO" id="PR:Q54J37"/>
<dbReference type="Proteomes" id="UP000002195">
    <property type="component" value="Chromosome 5"/>
</dbReference>
<dbReference type="GO" id="GO:0005737">
    <property type="term" value="C:cytoplasm"/>
    <property type="evidence" value="ECO:0007669"/>
    <property type="project" value="UniProtKB-SubCell"/>
</dbReference>
<dbReference type="GO" id="GO:0090443">
    <property type="term" value="C:FAR/SIN/STRIPAK complex"/>
    <property type="evidence" value="ECO:0000318"/>
    <property type="project" value="GO_Central"/>
</dbReference>
<dbReference type="GO" id="GO:0016020">
    <property type="term" value="C:membrane"/>
    <property type="evidence" value="ECO:0007669"/>
    <property type="project" value="UniProtKB-SubCell"/>
</dbReference>
<dbReference type="GO" id="GO:0005516">
    <property type="term" value="F:calmodulin binding"/>
    <property type="evidence" value="ECO:0007669"/>
    <property type="project" value="UniProtKB-KW"/>
</dbReference>
<dbReference type="GO" id="GO:0009966">
    <property type="term" value="P:regulation of signal transduction"/>
    <property type="evidence" value="ECO:0000318"/>
    <property type="project" value="GO_Central"/>
</dbReference>
<dbReference type="CDD" id="cd00200">
    <property type="entry name" value="WD40"/>
    <property type="match status" value="1"/>
</dbReference>
<dbReference type="Gene3D" id="1.20.5.300">
    <property type="match status" value="1"/>
</dbReference>
<dbReference type="Gene3D" id="2.130.10.10">
    <property type="entry name" value="YVTN repeat-like/Quinoprotein amine dehydrogenase"/>
    <property type="match status" value="2"/>
</dbReference>
<dbReference type="InterPro" id="IPR020472">
    <property type="entry name" value="G-protein_beta_WD-40_rep"/>
</dbReference>
<dbReference type="InterPro" id="IPR013258">
    <property type="entry name" value="Striatin_N"/>
</dbReference>
<dbReference type="InterPro" id="IPR015943">
    <property type="entry name" value="WD40/YVTN_repeat-like_dom_sf"/>
</dbReference>
<dbReference type="InterPro" id="IPR019775">
    <property type="entry name" value="WD40_repeat_CS"/>
</dbReference>
<dbReference type="InterPro" id="IPR036322">
    <property type="entry name" value="WD40_repeat_dom_sf"/>
</dbReference>
<dbReference type="InterPro" id="IPR001680">
    <property type="entry name" value="WD40_rpt"/>
</dbReference>
<dbReference type="InterPro" id="IPR051488">
    <property type="entry name" value="WD_repeat_striatin"/>
</dbReference>
<dbReference type="PANTHER" id="PTHR15653:SF0">
    <property type="entry name" value="CONNECTOR OF KINASE TO AP-1, ISOFORM E"/>
    <property type="match status" value="1"/>
</dbReference>
<dbReference type="PANTHER" id="PTHR15653">
    <property type="entry name" value="STRIATIN"/>
    <property type="match status" value="1"/>
</dbReference>
<dbReference type="Pfam" id="PF08232">
    <property type="entry name" value="Striatin"/>
    <property type="match status" value="1"/>
</dbReference>
<dbReference type="Pfam" id="PF00400">
    <property type="entry name" value="WD40"/>
    <property type="match status" value="4"/>
</dbReference>
<dbReference type="PRINTS" id="PR00320">
    <property type="entry name" value="GPROTEINBRPT"/>
</dbReference>
<dbReference type="SMART" id="SM00320">
    <property type="entry name" value="WD40"/>
    <property type="match status" value="7"/>
</dbReference>
<dbReference type="SUPFAM" id="SSF50978">
    <property type="entry name" value="WD40 repeat-like"/>
    <property type="match status" value="1"/>
</dbReference>
<dbReference type="PROSITE" id="PS00678">
    <property type="entry name" value="WD_REPEATS_1"/>
    <property type="match status" value="3"/>
</dbReference>
<dbReference type="PROSITE" id="PS50082">
    <property type="entry name" value="WD_REPEATS_2"/>
    <property type="match status" value="4"/>
</dbReference>
<dbReference type="PROSITE" id="PS50294">
    <property type="entry name" value="WD_REPEATS_REGION"/>
    <property type="match status" value="1"/>
</dbReference>
<sequence length="827" mass="91756">MDNQNNNNALANGDSQFTMPKVIDYLQNEWLKFEVDRAHWISEKAELTNRILKLESERKLFESHKFDLCRRVKMLEYALQQERLKNNSLLQQQQKVIEKVEEEEEEDDKIPKNREPPKKSKDNTTRLIIRKYLREMGYNDLIVSKSLQTEFENDSQNIDNDTTNTIDDTNDTTVKTILNLKDINNNNSNNNNKNQTTTTTTTSPSPSPSPSTSTSTSTSSNKTDNTTTTTTNGNGYNSNTIISPPSSSSSSSSSSSSSSSQSQPQPQLQSSLSELINNTTDLSQSLDSLSSASSGYEYDSLLDNLKQLDNSSVSSNSGNNSINSSSDSLDTSKQSQEDPNNVTISKQQQQEQQQQQESDEQSFNSFNEDIFNKLTANSKGRMKIKGLGNLKNYKKEHMGEEGNLSLPDQNTEEKSTPTTKSSSSSSSSSTGSTRKKKSSSSSSSGSSSSNSNTMNSELMGLGASDLNDITLDDGSKGGNDSAAPRVWKFKHSLKSHFDGVRSIQFHPNEPIMISASEDNSIKVWNLNHLVPTKKSPSPEIEPLYTIRGHTGPVFTSEWNQINGEYSNYQSFFSAGYDMIIRQWSLPSSDIDSYLQHGKILPYLEKEFIGGHQDGIWDLLSIPNTPNLLSSSADGTVSLWNTTTSEQLYTLQHSNGLSYIPTSIALPATENNRKLLTSYNDGSILLFDLETQQIISQLKQGSSNNNNNNNNNSQINKIVSHPFMPLAMTGSEDHKIEFFDLNSNTVVHSMIAHSNSISSLTIDPSGLYIASCAHDSSIRFWDISSKTCIQDLNSHRPKYDESIHCIKYHPNKGYFASGGADSVIRILN</sequence>
<keyword id="KW-0112">Calmodulin-binding</keyword>
<keyword id="KW-0175">Coiled coil</keyword>
<keyword id="KW-0963">Cytoplasm</keyword>
<keyword id="KW-0472">Membrane</keyword>
<keyword id="KW-1185">Reference proteome</keyword>
<keyword id="KW-0677">Repeat</keyword>
<keyword id="KW-0853">WD repeat</keyword>
<reference key="1">
    <citation type="journal article" date="2005" name="Nature">
        <title>The genome of the social amoeba Dictyostelium discoideum.</title>
        <authorList>
            <person name="Eichinger L."/>
            <person name="Pachebat J.A."/>
            <person name="Gloeckner G."/>
            <person name="Rajandream M.A."/>
            <person name="Sucgang R."/>
            <person name="Berriman M."/>
            <person name="Song J."/>
            <person name="Olsen R."/>
            <person name="Szafranski K."/>
            <person name="Xu Q."/>
            <person name="Tunggal B."/>
            <person name="Kummerfeld S."/>
            <person name="Madera M."/>
            <person name="Konfortov B.A."/>
            <person name="Rivero F."/>
            <person name="Bankier A.T."/>
            <person name="Lehmann R."/>
            <person name="Hamlin N."/>
            <person name="Davies R."/>
            <person name="Gaudet P."/>
            <person name="Fey P."/>
            <person name="Pilcher K."/>
            <person name="Chen G."/>
            <person name="Saunders D."/>
            <person name="Sodergren E.J."/>
            <person name="Davis P."/>
            <person name="Kerhornou A."/>
            <person name="Nie X."/>
            <person name="Hall N."/>
            <person name="Anjard C."/>
            <person name="Hemphill L."/>
            <person name="Bason N."/>
            <person name="Farbrother P."/>
            <person name="Desany B."/>
            <person name="Just E."/>
            <person name="Morio T."/>
            <person name="Rost R."/>
            <person name="Churcher C.M."/>
            <person name="Cooper J."/>
            <person name="Haydock S."/>
            <person name="van Driessche N."/>
            <person name="Cronin A."/>
            <person name="Goodhead I."/>
            <person name="Muzny D.M."/>
            <person name="Mourier T."/>
            <person name="Pain A."/>
            <person name="Lu M."/>
            <person name="Harper D."/>
            <person name="Lindsay R."/>
            <person name="Hauser H."/>
            <person name="James K.D."/>
            <person name="Quiles M."/>
            <person name="Madan Babu M."/>
            <person name="Saito T."/>
            <person name="Buchrieser C."/>
            <person name="Wardroper A."/>
            <person name="Felder M."/>
            <person name="Thangavelu M."/>
            <person name="Johnson D."/>
            <person name="Knights A."/>
            <person name="Loulseged H."/>
            <person name="Mungall K.L."/>
            <person name="Oliver K."/>
            <person name="Price C."/>
            <person name="Quail M.A."/>
            <person name="Urushihara H."/>
            <person name="Hernandez J."/>
            <person name="Rabbinowitsch E."/>
            <person name="Steffen D."/>
            <person name="Sanders M."/>
            <person name="Ma J."/>
            <person name="Kohara Y."/>
            <person name="Sharp S."/>
            <person name="Simmonds M.N."/>
            <person name="Spiegler S."/>
            <person name="Tivey A."/>
            <person name="Sugano S."/>
            <person name="White B."/>
            <person name="Walker D."/>
            <person name="Woodward J.R."/>
            <person name="Winckler T."/>
            <person name="Tanaka Y."/>
            <person name="Shaulsky G."/>
            <person name="Schleicher M."/>
            <person name="Weinstock G.M."/>
            <person name="Rosenthal A."/>
            <person name="Cox E.C."/>
            <person name="Chisholm R.L."/>
            <person name="Gibbs R.A."/>
            <person name="Loomis W.F."/>
            <person name="Platzer M."/>
            <person name="Kay R.R."/>
            <person name="Williams J.G."/>
            <person name="Dear P.H."/>
            <person name="Noegel A.A."/>
            <person name="Barrell B.G."/>
            <person name="Kuspa A."/>
        </authorList>
    </citation>
    <scope>NUCLEOTIDE SEQUENCE [LARGE SCALE GENOMIC DNA]</scope>
    <source>
        <strain>AX4</strain>
    </source>
</reference>
<comment type="function">
    <text evidence="2">Calmodulin-binding scaffolding protein which is the center of the striatin-interacting phosphatase and kinase (STRIPAK) complexes. STRIPAK complexes have critical roles in protein (de)phosphorylation and are regulators of multiple signaling pathways including Hippo, MAPK, nuclear receptor and cytoskeleton remodeling. Different types of STRIPAK complexes are involved in a variety of biological processes such as cell growth, differentiation, apoptosis, metabolism and immune regulation.</text>
</comment>
<comment type="subunit">
    <text evidence="2">Part of the core of STRIPAK complexes.</text>
</comment>
<comment type="subcellular location">
    <subcellularLocation>
        <location evidence="1">Cytoplasm</location>
    </subcellularLocation>
    <subcellularLocation>
        <location evidence="1">Membrane</location>
        <topology evidence="1">Peripheral membrane protein</topology>
    </subcellularLocation>
</comment>
<comment type="similarity">
    <text evidence="5">Belongs to the WD repeat striatin family.</text>
</comment>
<name>STRN_DICDI</name>
<organism>
    <name type="scientific">Dictyostelium discoideum</name>
    <name type="common">Social amoeba</name>
    <dbReference type="NCBI Taxonomy" id="44689"/>
    <lineage>
        <taxon>Eukaryota</taxon>
        <taxon>Amoebozoa</taxon>
        <taxon>Evosea</taxon>
        <taxon>Eumycetozoa</taxon>
        <taxon>Dictyostelia</taxon>
        <taxon>Dictyosteliales</taxon>
        <taxon>Dictyosteliaceae</taxon>
        <taxon>Dictyostelium</taxon>
    </lineage>
</organism>
<accession>Q54J37</accession>
<gene>
    <name type="primary">strn</name>
    <name type="ORF">DDB_G0288327</name>
</gene>
<proteinExistence type="inferred from homology"/>